<evidence type="ECO:0000255" key="1">
    <source>
        <dbReference type="HAMAP-Rule" id="MF_01596"/>
    </source>
</evidence>
<comment type="function">
    <text evidence="1">PhoP-regulated transcription is redox-sensitive, being activated when the periplasm becomes more reducing. MgrB acts between DsbA/DsbB and PhoP/PhoQ in this pathway. Represses PhoP/PhoQ signaling, possibly by binding to the periplasmic domain of PhoQ, altering its activity and that of downstream effector PhoP.</text>
</comment>
<comment type="subunit">
    <text evidence="1">May form homooligomers. Probably interacts with the periplasmic domain of PhoQ.</text>
</comment>
<comment type="subcellular location">
    <subcellularLocation>
        <location evidence="1">Cell inner membrane</location>
        <topology evidence="1">Single-pass membrane protein</topology>
    </subcellularLocation>
</comment>
<comment type="similarity">
    <text evidence="1">Belongs to the MgrB family.</text>
</comment>
<protein>
    <recommendedName>
        <fullName evidence="1">PhoP/PhoQ regulator MgrB</fullName>
    </recommendedName>
</protein>
<reference key="1">
    <citation type="journal article" date="2010" name="PLoS ONE">
        <title>Genome sequence of Cronobacter sakazakii BAA-894 and comparative genomic hybridization analysis with other Cronobacter species.</title>
        <authorList>
            <person name="Kucerova E."/>
            <person name="Clifton S.W."/>
            <person name="Xia X.Q."/>
            <person name="Long F."/>
            <person name="Porwollik S."/>
            <person name="Fulton L."/>
            <person name="Fronick C."/>
            <person name="Minx P."/>
            <person name="Kyung K."/>
            <person name="Warren W."/>
            <person name="Fulton R."/>
            <person name="Feng D."/>
            <person name="Wollam A."/>
            <person name="Shah N."/>
            <person name="Bhonagiri V."/>
            <person name="Nash W.E."/>
            <person name="Hallsworth-Pepin K."/>
            <person name="Wilson R.K."/>
            <person name="McClelland M."/>
            <person name="Forsythe S.J."/>
        </authorList>
    </citation>
    <scope>NUCLEOTIDE SEQUENCE [LARGE SCALE GENOMIC DNA]</scope>
    <source>
        <strain>ATCC BAA-894</strain>
    </source>
</reference>
<proteinExistence type="inferred from homology"/>
<dbReference type="EMBL" id="CP000783">
    <property type="protein sequence ID" value="ABU76683.1"/>
    <property type="molecule type" value="Genomic_DNA"/>
</dbReference>
<dbReference type="RefSeq" id="WP_004386685.1">
    <property type="nucleotide sequence ID" value="NC_009778.1"/>
</dbReference>
<dbReference type="GeneID" id="56730270"/>
<dbReference type="KEGG" id="esa:ESA_01425"/>
<dbReference type="HOGENOM" id="CLU_208030_1_0_6"/>
<dbReference type="Proteomes" id="UP000000260">
    <property type="component" value="Chromosome"/>
</dbReference>
<dbReference type="GO" id="GO:0005886">
    <property type="term" value="C:plasma membrane"/>
    <property type="evidence" value="ECO:0007669"/>
    <property type="project" value="UniProtKB-SubCell"/>
</dbReference>
<dbReference type="GO" id="GO:0070298">
    <property type="term" value="P:negative regulation of phosphorelay signal transduction system"/>
    <property type="evidence" value="ECO:0007669"/>
    <property type="project" value="UniProtKB-UniRule"/>
</dbReference>
<dbReference type="HAMAP" id="MF_01596">
    <property type="entry name" value="MgrB"/>
    <property type="match status" value="1"/>
</dbReference>
<dbReference type="InterPro" id="IPR020907">
    <property type="entry name" value="MgrB"/>
</dbReference>
<dbReference type="NCBIfam" id="NF007635">
    <property type="entry name" value="PRK10299.1"/>
    <property type="match status" value="1"/>
</dbReference>
<dbReference type="Pfam" id="PF13998">
    <property type="entry name" value="MgrB"/>
    <property type="match status" value="1"/>
</dbReference>
<dbReference type="PROSITE" id="PS51257">
    <property type="entry name" value="PROKAR_LIPOPROTEIN"/>
    <property type="match status" value="1"/>
</dbReference>
<gene>
    <name evidence="1" type="primary">mgrB</name>
    <name type="ordered locus">ESA_01425</name>
</gene>
<organism>
    <name type="scientific">Cronobacter sakazakii (strain ATCC BAA-894)</name>
    <name type="common">Enterobacter sakazakii</name>
    <dbReference type="NCBI Taxonomy" id="290339"/>
    <lineage>
        <taxon>Bacteria</taxon>
        <taxon>Pseudomonadati</taxon>
        <taxon>Pseudomonadota</taxon>
        <taxon>Gammaproteobacteria</taxon>
        <taxon>Enterobacterales</taxon>
        <taxon>Enterobacteriaceae</taxon>
        <taxon>Cronobacter</taxon>
    </lineage>
</organism>
<feature type="chain" id="PRO_0000330667" description="PhoP/PhoQ regulator MgrB">
    <location>
        <begin position="1"/>
        <end position="47"/>
    </location>
</feature>
<feature type="transmembrane region" description="Helical" evidence="1">
    <location>
        <begin position="6"/>
        <end position="26"/>
    </location>
</feature>
<accession>A7MNL7</accession>
<name>MGRB_CROS8</name>
<sequence length="47" mass="5550">MKKFRWAILLAVLVACLLLWMQTLNVMCDQDVQFFSGICTINKFIPW</sequence>
<keyword id="KW-0997">Cell inner membrane</keyword>
<keyword id="KW-1003">Cell membrane</keyword>
<keyword id="KW-0472">Membrane</keyword>
<keyword id="KW-1185">Reference proteome</keyword>
<keyword id="KW-0812">Transmembrane</keyword>
<keyword id="KW-1133">Transmembrane helix</keyword>